<protein>
    <recommendedName>
        <fullName>Probable pectin lyase F</fullName>
        <shortName>PLF</shortName>
        <ecNumber>4.2.2.10</ecNumber>
    </recommendedName>
</protein>
<reference key="1">
    <citation type="journal article" date="2002" name="FEBS Lett.">
        <title>Expression profiling of pectinolytic genes from Aspergillus niger.</title>
        <authorList>
            <person name="de Vries R.P."/>
            <person name="Jansen J."/>
            <person name="Aguilar G."/>
            <person name="Paenicova L."/>
            <person name="Joosten J.A.E."/>
            <person name="Wulfert F."/>
            <person name="Visser J."/>
        </authorList>
    </citation>
    <scope>NUCLEOTIDE SEQUENCE [GENOMIC DNA]</scope>
    <source>
        <strain>ATCC 9029 / NRRL 3 / CBS 120.49 / DSM 2466 / N400 / FGSC 732</strain>
    </source>
</reference>
<dbReference type="EC" id="4.2.2.10"/>
<dbReference type="EMBL" id="AJ489943">
    <property type="protein sequence ID" value="CAD34589.1"/>
    <property type="molecule type" value="Genomic_DNA"/>
</dbReference>
<dbReference type="RefSeq" id="XP_001397243.1">
    <property type="nucleotide sequence ID" value="XM_001397206.2"/>
</dbReference>
<dbReference type="SMR" id="Q8NJK6"/>
<dbReference type="CAZy" id="PL1">
    <property type="family name" value="Polysaccharide Lyase Family 1"/>
</dbReference>
<dbReference type="GlyCosmos" id="Q8NJK6">
    <property type="glycosylation" value="5 sites, No reported glycans"/>
</dbReference>
<dbReference type="PaxDb" id="5061-CADANGAP00012161"/>
<dbReference type="EnsemblFungi" id="CAK48551">
    <property type="protein sequence ID" value="CAK48551"/>
    <property type="gene ID" value="An15g07160"/>
</dbReference>
<dbReference type="KEGG" id="ang:An15g07160"/>
<dbReference type="VEuPathDB" id="FungiDB:An15g07160"/>
<dbReference type="VEuPathDB" id="FungiDB:ASPNIDRAFT2_1164044"/>
<dbReference type="VEuPathDB" id="FungiDB:ATCC64974_27210"/>
<dbReference type="VEuPathDB" id="FungiDB:M747DRAFT_313795"/>
<dbReference type="eggNOG" id="ENOG502QXM6">
    <property type="taxonomic scope" value="Eukaryota"/>
</dbReference>
<dbReference type="OrthoDB" id="1637350at2759"/>
<dbReference type="GO" id="GO:0005576">
    <property type="term" value="C:extracellular region"/>
    <property type="evidence" value="ECO:0007669"/>
    <property type="project" value="UniProtKB-SubCell"/>
</dbReference>
<dbReference type="GO" id="GO:0030570">
    <property type="term" value="F:pectate lyase activity"/>
    <property type="evidence" value="ECO:0007669"/>
    <property type="project" value="InterPro"/>
</dbReference>
<dbReference type="GO" id="GO:0047490">
    <property type="term" value="F:pectin lyase activity"/>
    <property type="evidence" value="ECO:0000250"/>
    <property type="project" value="UniProtKB"/>
</dbReference>
<dbReference type="GO" id="GO:0071555">
    <property type="term" value="P:cell wall organization"/>
    <property type="evidence" value="ECO:0007669"/>
    <property type="project" value="UniProtKB-KW"/>
</dbReference>
<dbReference type="GO" id="GO:0045490">
    <property type="term" value="P:pectin catabolic process"/>
    <property type="evidence" value="ECO:0000250"/>
    <property type="project" value="UniProtKB"/>
</dbReference>
<dbReference type="FunFam" id="2.160.20.10:FF:000003">
    <property type="entry name" value="Pectin lyase F"/>
    <property type="match status" value="1"/>
</dbReference>
<dbReference type="Gene3D" id="2.160.20.10">
    <property type="entry name" value="Single-stranded right-handed beta-helix, Pectin lyase-like"/>
    <property type="match status" value="1"/>
</dbReference>
<dbReference type="InterPro" id="IPR002022">
    <property type="entry name" value="Pec_lyase"/>
</dbReference>
<dbReference type="InterPro" id="IPR012334">
    <property type="entry name" value="Pectin_lyas_fold"/>
</dbReference>
<dbReference type="InterPro" id="IPR011050">
    <property type="entry name" value="Pectin_lyase_fold/virulence"/>
</dbReference>
<dbReference type="InterPro" id="IPR045032">
    <property type="entry name" value="PEL"/>
</dbReference>
<dbReference type="PANTHER" id="PTHR31683">
    <property type="entry name" value="PECTATE LYASE 18-RELATED"/>
    <property type="match status" value="1"/>
</dbReference>
<dbReference type="PANTHER" id="PTHR31683:SF67">
    <property type="entry name" value="PECTIN LYASE F-RELATED"/>
    <property type="match status" value="1"/>
</dbReference>
<dbReference type="Pfam" id="PF00544">
    <property type="entry name" value="Pectate_lyase_4"/>
    <property type="match status" value="1"/>
</dbReference>
<dbReference type="SMART" id="SM00656">
    <property type="entry name" value="Amb_all"/>
    <property type="match status" value="1"/>
</dbReference>
<dbReference type="SUPFAM" id="SSF51126">
    <property type="entry name" value="Pectin lyase-like"/>
    <property type="match status" value="1"/>
</dbReference>
<accession>Q8NJK6</accession>
<organism>
    <name type="scientific">Aspergillus niger</name>
    <dbReference type="NCBI Taxonomy" id="5061"/>
    <lineage>
        <taxon>Eukaryota</taxon>
        <taxon>Fungi</taxon>
        <taxon>Dikarya</taxon>
        <taxon>Ascomycota</taxon>
        <taxon>Pezizomycotina</taxon>
        <taxon>Eurotiomycetes</taxon>
        <taxon>Eurotiomycetidae</taxon>
        <taxon>Eurotiales</taxon>
        <taxon>Aspergillaceae</taxon>
        <taxon>Aspergillus</taxon>
        <taxon>Aspergillus subgen. Circumdati</taxon>
    </lineage>
</organism>
<proteinExistence type="inferred from homology"/>
<keyword id="KW-0119">Carbohydrate metabolism</keyword>
<keyword id="KW-0961">Cell wall biogenesis/degradation</keyword>
<keyword id="KW-1015">Disulfide bond</keyword>
<keyword id="KW-0325">Glycoprotein</keyword>
<keyword id="KW-0456">Lyase</keyword>
<keyword id="KW-0624">Polysaccharide degradation</keyword>
<keyword id="KW-0964">Secreted</keyword>
<keyword id="KW-0732">Signal</keyword>
<sequence>MTLLRHLLTATALLGASVQAAQGVTGSPFGFASGTTGGGDATPAAPSDISQLKTWLSDSTPRVILIDKEFNFLGSEGKCTNCECCKPASNTCGSSGQNAVKQNGSDWCGSYPTLTCTYDNAGIEGLEVASNKSIVGVGSSGVLRGKGLRLVNGVSNIIIQNIHITELNPEFIWGGDAITLDGTNNVWIDHVKINLIGRQMFVAGYEASHSVTISNSEFDGETSWSATCDGHHYWTVLGYGHNDKITFANNYIHHTSGRSPKLEFNSFWHAYNNYWYNNTGHAFDVGKNTRALIEGNVMVQVDTPLLADSNPGAVFAVNTSDVSTCTSTLGRTCVPNTLISSGTLSGSDSSVISSWPSGESDVTVMAASKVASYVKANAGIGKLGNGSGSSSTVGAAATSAVAKRADSDDAPFVPAYSEAGPGASAVPTQPSWSWRTVTNGPAPTGAPSDSPSAPQGLGAPVQASNKHHHQGHGRGY</sequence>
<gene>
    <name type="primary">pelF</name>
</gene>
<comment type="function">
    <text evidence="1">Pectinolytic enzymes consist of four classes of enzymes: pectin lyase, polygalacturonase, pectin methylesterase and rhamnogalacturonase. Among pectinolytic enzymes, pectin lyase is the most important in depolymerization of pectin, since it cleaves internal glycosidic bonds of highly methylated pectins (By similarity).</text>
</comment>
<comment type="catalytic activity">
    <reaction>
        <text>Eliminative cleavage of (1-&gt;4)-alpha-D-galacturonan methyl ester to give oligosaccharides with 4-deoxy-6-O-methyl-alpha-D-galact-4-enuronosyl groups at their non-reducing ends.</text>
        <dbReference type="EC" id="4.2.2.10"/>
    </reaction>
</comment>
<comment type="subcellular location">
    <subcellularLocation>
        <location evidence="1">Secreted</location>
    </subcellularLocation>
</comment>
<comment type="similarity">
    <text evidence="4">Belongs to the polysaccharide lyase 1 family.</text>
</comment>
<evidence type="ECO:0000250" key="1"/>
<evidence type="ECO:0000255" key="2"/>
<evidence type="ECO:0000256" key="3">
    <source>
        <dbReference type="SAM" id="MobiDB-lite"/>
    </source>
</evidence>
<evidence type="ECO:0000305" key="4"/>
<name>PELF_ASPNG</name>
<feature type="signal peptide" evidence="2">
    <location>
        <begin position="1"/>
        <end position="17"/>
    </location>
</feature>
<feature type="chain" id="PRO_0000394358" description="Probable pectin lyase F">
    <location>
        <begin position="18"/>
        <end position="476"/>
    </location>
</feature>
<feature type="region of interest" description="Disordered" evidence="3">
    <location>
        <begin position="412"/>
        <end position="476"/>
    </location>
</feature>
<feature type="compositionally biased region" description="Polar residues" evidence="3">
    <location>
        <begin position="426"/>
        <end position="453"/>
    </location>
</feature>
<feature type="compositionally biased region" description="Basic residues" evidence="3">
    <location>
        <begin position="465"/>
        <end position="476"/>
    </location>
</feature>
<feature type="active site" evidence="2">
    <location>
        <position position="258"/>
    </location>
</feature>
<feature type="glycosylation site" description="N-linked (GlcNAc...) asparagine" evidence="2">
    <location>
        <position position="103"/>
    </location>
</feature>
<feature type="glycosylation site" description="N-linked (GlcNAc...) asparagine" evidence="2">
    <location>
        <position position="131"/>
    </location>
</feature>
<feature type="glycosylation site" description="N-linked (GlcNAc...) asparagine" evidence="2">
    <location>
        <position position="277"/>
    </location>
</feature>
<feature type="glycosylation site" description="N-linked (GlcNAc...) asparagine" evidence="2">
    <location>
        <position position="318"/>
    </location>
</feature>
<feature type="glycosylation site" description="N-linked (GlcNAc...) asparagine" evidence="2">
    <location>
        <position position="385"/>
    </location>
</feature>
<feature type="disulfide bond" evidence="1">
    <location>
        <begin position="84"/>
        <end position="108"/>
    </location>
</feature>
<feature type="disulfide bond" evidence="1">
    <location>
        <begin position="325"/>
        <end position="333"/>
    </location>
</feature>